<evidence type="ECO:0000250" key="1"/>
<evidence type="ECO:0000255" key="2">
    <source>
        <dbReference type="HAMAP-Rule" id="MF_00944"/>
    </source>
</evidence>
<evidence type="ECO:0000255" key="3">
    <source>
        <dbReference type="PROSITE-ProRule" id="PRU01228"/>
    </source>
</evidence>
<reference key="1">
    <citation type="journal article" date="2003" name="Proc. Natl. Acad. Sci. U.S.A.">
        <title>Reductive genome evolution in Buchnera aphidicola.</title>
        <authorList>
            <person name="van Ham R.C.H.J."/>
            <person name="Kamerbeek J."/>
            <person name="Palacios C."/>
            <person name="Rausell C."/>
            <person name="Abascal F."/>
            <person name="Bastolla U."/>
            <person name="Fernandez J.M."/>
            <person name="Jimenez L."/>
            <person name="Postigo M."/>
            <person name="Silva F.J."/>
            <person name="Tamames J."/>
            <person name="Viguera E."/>
            <person name="Latorre A."/>
            <person name="Valencia A."/>
            <person name="Moran F."/>
            <person name="Moya A."/>
        </authorList>
    </citation>
    <scope>NUCLEOTIDE SEQUENCE [LARGE SCALE GENOMIC DNA]</scope>
    <source>
        <strain>Bp</strain>
    </source>
</reference>
<proteinExistence type="inferred from homology"/>
<dbReference type="EMBL" id="AE016826">
    <property type="protein sequence ID" value="AAO26912.1"/>
    <property type="molecule type" value="Genomic_DNA"/>
</dbReference>
<dbReference type="RefSeq" id="WP_011091313.1">
    <property type="nucleotide sequence ID" value="NC_004545.1"/>
</dbReference>
<dbReference type="SMR" id="Q89AR6"/>
<dbReference type="STRING" id="224915.bbp_180"/>
<dbReference type="KEGG" id="bab:bbp_180"/>
<dbReference type="eggNOG" id="COG0012">
    <property type="taxonomic scope" value="Bacteria"/>
</dbReference>
<dbReference type="HOGENOM" id="CLU_018395_0_1_6"/>
<dbReference type="OrthoDB" id="9810373at2"/>
<dbReference type="Proteomes" id="UP000000601">
    <property type="component" value="Chromosome"/>
</dbReference>
<dbReference type="GO" id="GO:0005737">
    <property type="term" value="C:cytoplasm"/>
    <property type="evidence" value="ECO:0007669"/>
    <property type="project" value="TreeGrafter"/>
</dbReference>
<dbReference type="GO" id="GO:0005524">
    <property type="term" value="F:ATP binding"/>
    <property type="evidence" value="ECO:0007669"/>
    <property type="project" value="UniProtKB-UniRule"/>
</dbReference>
<dbReference type="GO" id="GO:0016887">
    <property type="term" value="F:ATP hydrolysis activity"/>
    <property type="evidence" value="ECO:0007669"/>
    <property type="project" value="UniProtKB-UniRule"/>
</dbReference>
<dbReference type="GO" id="GO:0005525">
    <property type="term" value="F:GTP binding"/>
    <property type="evidence" value="ECO:0007669"/>
    <property type="project" value="InterPro"/>
</dbReference>
<dbReference type="GO" id="GO:0046872">
    <property type="term" value="F:metal ion binding"/>
    <property type="evidence" value="ECO:0007669"/>
    <property type="project" value="UniProtKB-KW"/>
</dbReference>
<dbReference type="GO" id="GO:0043023">
    <property type="term" value="F:ribosomal large subunit binding"/>
    <property type="evidence" value="ECO:0007669"/>
    <property type="project" value="UniProtKB-UniRule"/>
</dbReference>
<dbReference type="CDD" id="cd04867">
    <property type="entry name" value="TGS_YchF_OLA1"/>
    <property type="match status" value="1"/>
</dbReference>
<dbReference type="CDD" id="cd01900">
    <property type="entry name" value="YchF"/>
    <property type="match status" value="1"/>
</dbReference>
<dbReference type="FunFam" id="1.10.150.300:FF:000001">
    <property type="entry name" value="Ribosome-binding ATPase YchF"/>
    <property type="match status" value="1"/>
</dbReference>
<dbReference type="FunFam" id="3.10.20.30:FF:000001">
    <property type="entry name" value="Ribosome-binding ATPase YchF"/>
    <property type="match status" value="1"/>
</dbReference>
<dbReference type="Gene3D" id="3.10.20.30">
    <property type="match status" value="1"/>
</dbReference>
<dbReference type="Gene3D" id="3.40.50.300">
    <property type="entry name" value="P-loop containing nucleotide triphosphate hydrolases"/>
    <property type="match status" value="1"/>
</dbReference>
<dbReference type="Gene3D" id="1.10.150.300">
    <property type="entry name" value="TGS-like domain"/>
    <property type="match status" value="1"/>
</dbReference>
<dbReference type="HAMAP" id="MF_00944">
    <property type="entry name" value="YchF_OLA1_ATPase"/>
    <property type="match status" value="1"/>
</dbReference>
<dbReference type="InterPro" id="IPR004396">
    <property type="entry name" value="ATPase_YchF/OLA1"/>
</dbReference>
<dbReference type="InterPro" id="IPR012675">
    <property type="entry name" value="Beta-grasp_dom_sf"/>
</dbReference>
<dbReference type="InterPro" id="IPR031167">
    <property type="entry name" value="G_OBG"/>
</dbReference>
<dbReference type="InterPro" id="IPR006073">
    <property type="entry name" value="GTP-bd"/>
</dbReference>
<dbReference type="InterPro" id="IPR027417">
    <property type="entry name" value="P-loop_NTPase"/>
</dbReference>
<dbReference type="InterPro" id="IPR004095">
    <property type="entry name" value="TGS"/>
</dbReference>
<dbReference type="InterPro" id="IPR012676">
    <property type="entry name" value="TGS-like"/>
</dbReference>
<dbReference type="InterPro" id="IPR023192">
    <property type="entry name" value="TGS-like_dom_sf"/>
</dbReference>
<dbReference type="InterPro" id="IPR013029">
    <property type="entry name" value="YchF_C"/>
</dbReference>
<dbReference type="InterPro" id="IPR041706">
    <property type="entry name" value="YchF_N"/>
</dbReference>
<dbReference type="NCBIfam" id="TIGR00092">
    <property type="entry name" value="redox-regulated ATPase YchF"/>
    <property type="match status" value="1"/>
</dbReference>
<dbReference type="PANTHER" id="PTHR23305">
    <property type="entry name" value="OBG GTPASE FAMILY"/>
    <property type="match status" value="1"/>
</dbReference>
<dbReference type="PANTHER" id="PTHR23305:SF18">
    <property type="entry name" value="OBG-TYPE G DOMAIN-CONTAINING PROTEIN"/>
    <property type="match status" value="1"/>
</dbReference>
<dbReference type="Pfam" id="PF01926">
    <property type="entry name" value="MMR_HSR1"/>
    <property type="match status" value="1"/>
</dbReference>
<dbReference type="Pfam" id="PF06071">
    <property type="entry name" value="YchF-GTPase_C"/>
    <property type="match status" value="1"/>
</dbReference>
<dbReference type="PIRSF" id="PIRSF006641">
    <property type="entry name" value="CHP00092"/>
    <property type="match status" value="1"/>
</dbReference>
<dbReference type="PRINTS" id="PR00326">
    <property type="entry name" value="GTP1OBG"/>
</dbReference>
<dbReference type="SUPFAM" id="SSF52540">
    <property type="entry name" value="P-loop containing nucleoside triphosphate hydrolases"/>
    <property type="match status" value="1"/>
</dbReference>
<dbReference type="SUPFAM" id="SSF81271">
    <property type="entry name" value="TGS-like"/>
    <property type="match status" value="1"/>
</dbReference>
<dbReference type="PROSITE" id="PS51710">
    <property type="entry name" value="G_OBG"/>
    <property type="match status" value="1"/>
</dbReference>
<dbReference type="PROSITE" id="PS51880">
    <property type="entry name" value="TGS"/>
    <property type="match status" value="1"/>
</dbReference>
<feature type="initiator methionine" description="Removed" evidence="1">
    <location>
        <position position="1"/>
    </location>
</feature>
<feature type="chain" id="PRO_0000201674" description="Ribosome-binding ATPase YchF">
    <location>
        <begin position="2"/>
        <end position="363"/>
    </location>
</feature>
<feature type="domain" description="OBG-type G">
    <location>
        <begin position="3"/>
        <end position="257"/>
    </location>
</feature>
<feature type="domain" description="TGS" evidence="3">
    <location>
        <begin position="278"/>
        <end position="361"/>
    </location>
</feature>
<feature type="binding site" evidence="2">
    <location>
        <begin position="12"/>
        <end position="17"/>
    </location>
    <ligand>
        <name>ATP</name>
        <dbReference type="ChEBI" id="CHEBI:30616"/>
    </ligand>
</feature>
<feature type="binding site" evidence="1">
    <location>
        <position position="16"/>
    </location>
    <ligand>
        <name>Mg(2+)</name>
        <dbReference type="ChEBI" id="CHEBI:18420"/>
    </ligand>
</feature>
<feature type="binding site" evidence="1">
    <location>
        <position position="36"/>
    </location>
    <ligand>
        <name>Mg(2+)</name>
        <dbReference type="ChEBI" id="CHEBI:18420"/>
    </ligand>
</feature>
<accession>Q89AR6</accession>
<sequence length="363" mass="41674">MGFKCGFVGLPNVGKSTLFNYLTKLNIPADNYPFCTIKSNVGIVPVLDNRLNKIAQVVCSNKIIPATIELVDIAGLVKGAYKGEGLGNQFLDHIRDTNVIMHIVRCFENRYVTHIYGSVDPVRDVQIINLELILSDIEVCKNRMCKLEINKLSHNKQVNKELLILKKCVYHLEKSKSLRSLNLTEEEIFVINYLRLITLKPVVYIFNISIDQSRNLYKREIFDIIKNEHNAKTVNVCLDLMQSSKNDVSAYDHLSLKYKQLFNKMLKNVIWAGFNALNLITFFTAGKKEVHAWTTTNNLFIFQSVKCIHTDLSKGFIRAQVISYDDFIKYKGEKRSKELGKIRIEGKRYVICDGDIIHVLYNV</sequence>
<keyword id="KW-0067">ATP-binding</keyword>
<keyword id="KW-0460">Magnesium</keyword>
<keyword id="KW-0479">Metal-binding</keyword>
<keyword id="KW-0547">Nucleotide-binding</keyword>
<keyword id="KW-1185">Reference proteome</keyword>
<gene>
    <name evidence="2" type="primary">ychF</name>
    <name type="synonym">engD</name>
    <name type="ordered locus">bbp_180</name>
</gene>
<comment type="function">
    <text evidence="2">ATPase that binds to both the 70S ribosome and the 50S ribosomal subunit in a nucleotide-independent manner.</text>
</comment>
<comment type="cofactor">
    <cofactor evidence="1">
        <name>Mg(2+)</name>
        <dbReference type="ChEBI" id="CHEBI:18420"/>
    </cofactor>
</comment>
<comment type="similarity">
    <text evidence="2">Belongs to the TRAFAC class OBG-HflX-like GTPase superfamily. OBG GTPase family. YchF/OLA1 subfamily.</text>
</comment>
<protein>
    <recommendedName>
        <fullName evidence="2">Ribosome-binding ATPase YchF</fullName>
    </recommendedName>
</protein>
<organism>
    <name type="scientific">Buchnera aphidicola subsp. Baizongia pistaciae (strain Bp)</name>
    <dbReference type="NCBI Taxonomy" id="224915"/>
    <lineage>
        <taxon>Bacteria</taxon>
        <taxon>Pseudomonadati</taxon>
        <taxon>Pseudomonadota</taxon>
        <taxon>Gammaproteobacteria</taxon>
        <taxon>Enterobacterales</taxon>
        <taxon>Erwiniaceae</taxon>
        <taxon>Buchnera</taxon>
    </lineage>
</organism>
<name>YCHF_BUCBP</name>